<name>MSMO1_CHICK</name>
<reference key="1">
    <citation type="journal article" date="2005" name="Genome Biol.">
        <title>Full-length cDNAs from chicken bursal lymphocytes to facilitate gene function analysis.</title>
        <authorList>
            <person name="Caldwell R.B."/>
            <person name="Kierzek A.M."/>
            <person name="Arakawa H."/>
            <person name="Bezzubov Y."/>
            <person name="Zaim J."/>
            <person name="Fiedler P."/>
            <person name="Kutter S."/>
            <person name="Blagodatski A."/>
            <person name="Kostovska D."/>
            <person name="Koter M."/>
            <person name="Plachy J."/>
            <person name="Carninci P."/>
            <person name="Hayashizaki Y."/>
            <person name="Buerstedde J.-M."/>
        </authorList>
    </citation>
    <scope>NUCLEOTIDE SEQUENCE [LARGE SCALE MRNA]</scope>
    <source>
        <strain>CB</strain>
        <tissue>Bursa of Fabricius</tissue>
    </source>
</reference>
<accession>Q5ZLL6</accession>
<comment type="function">
    <text evidence="2">Catalyzes the first step in the removal of the two C-4 methyl groups of 4,4-dimethylzymosterol.</text>
</comment>
<comment type="catalytic activity">
    <reaction evidence="2">
        <text>4,4-dimethyl-5alpha-cholest-7-en-3beta-ol + 6 Fe(II)-[cytochrome b5] + 3 O2 + 5 H(+) = 4alpha-carboxy-4beta-methyl-5alpha-cholest-7-ene-3beta-ol + 6 Fe(III)-[cytochrome b5] + 4 H2O</text>
        <dbReference type="Rhea" id="RHEA:55220"/>
        <dbReference type="Rhea" id="RHEA-COMP:10438"/>
        <dbReference type="Rhea" id="RHEA-COMP:10439"/>
        <dbReference type="ChEBI" id="CHEBI:15377"/>
        <dbReference type="ChEBI" id="CHEBI:15378"/>
        <dbReference type="ChEBI" id="CHEBI:15379"/>
        <dbReference type="ChEBI" id="CHEBI:16455"/>
        <dbReference type="ChEBI" id="CHEBI:29033"/>
        <dbReference type="ChEBI" id="CHEBI:29034"/>
        <dbReference type="ChEBI" id="CHEBI:58387"/>
        <dbReference type="EC" id="1.14.18.9"/>
    </reaction>
</comment>
<comment type="cofactor">
    <cofactor evidence="2">
        <name>Fe cation</name>
        <dbReference type="ChEBI" id="CHEBI:24875"/>
    </cofactor>
</comment>
<comment type="pathway">
    <text>Steroid biosynthesis; zymosterol biosynthesis; zymosterol from lanosterol: step 3/6.</text>
</comment>
<comment type="subcellular location">
    <subcellularLocation>
        <location evidence="4">Endoplasmic reticulum membrane</location>
        <topology evidence="4">Multi-pass membrane protein</topology>
    </subcellularLocation>
</comment>
<comment type="domain">
    <text>The histidine box domains may contain the active site and/or be involved in metal ion binding.</text>
</comment>
<comment type="similarity">
    <text evidence="4">Belongs to the sterol desaturase family.</text>
</comment>
<dbReference type="EC" id="1.14.18.9" evidence="2"/>
<dbReference type="EMBL" id="AJ719718">
    <property type="protein sequence ID" value="CAG31377.1"/>
    <property type="molecule type" value="mRNA"/>
</dbReference>
<dbReference type="RefSeq" id="NP_001006438.1">
    <property type="nucleotide sequence ID" value="NM_001006438.2"/>
</dbReference>
<dbReference type="RefSeq" id="XP_046771854.1">
    <property type="nucleotide sequence ID" value="XM_046915898.1"/>
</dbReference>
<dbReference type="RefSeq" id="XP_046796011.1">
    <property type="nucleotide sequence ID" value="XM_046940055.1"/>
</dbReference>
<dbReference type="FunCoup" id="Q5ZLL6">
    <property type="interactions" value="316"/>
</dbReference>
<dbReference type="STRING" id="9031.ENSGALP00000015550"/>
<dbReference type="PaxDb" id="9031-ENSGALP00000015550"/>
<dbReference type="GeneID" id="422423"/>
<dbReference type="KEGG" id="gga:422423"/>
<dbReference type="CTD" id="6307"/>
<dbReference type="VEuPathDB" id="HostDB:geneid_422423"/>
<dbReference type="eggNOG" id="KOG0873">
    <property type="taxonomic scope" value="Eukaryota"/>
</dbReference>
<dbReference type="InParanoid" id="Q5ZLL6"/>
<dbReference type="OMA" id="IVHEFIY"/>
<dbReference type="OrthoDB" id="1658724at2759"/>
<dbReference type="PhylomeDB" id="Q5ZLL6"/>
<dbReference type="UniPathway" id="UPA00770">
    <property type="reaction ID" value="UER00756"/>
</dbReference>
<dbReference type="PRO" id="PR:Q5ZLL6"/>
<dbReference type="Proteomes" id="UP000000539">
    <property type="component" value="Unassembled WGS sequence"/>
</dbReference>
<dbReference type="GO" id="GO:0005789">
    <property type="term" value="C:endoplasmic reticulum membrane"/>
    <property type="evidence" value="ECO:0000318"/>
    <property type="project" value="GO_Central"/>
</dbReference>
<dbReference type="GO" id="GO:0000254">
    <property type="term" value="F:C-4 methylsterol oxidase activity"/>
    <property type="evidence" value="ECO:0000318"/>
    <property type="project" value="GO_Central"/>
</dbReference>
<dbReference type="GO" id="GO:0005506">
    <property type="term" value="F:iron ion binding"/>
    <property type="evidence" value="ECO:0007669"/>
    <property type="project" value="InterPro"/>
</dbReference>
<dbReference type="GO" id="GO:0016126">
    <property type="term" value="P:sterol biosynthetic process"/>
    <property type="evidence" value="ECO:0000318"/>
    <property type="project" value="GO_Central"/>
</dbReference>
<dbReference type="InterPro" id="IPR006694">
    <property type="entry name" value="Fatty_acid_hydroxylase"/>
</dbReference>
<dbReference type="InterPro" id="IPR050307">
    <property type="entry name" value="Sterol_Desaturase_Related"/>
</dbReference>
<dbReference type="PANTHER" id="PTHR11863">
    <property type="entry name" value="STEROL DESATURASE"/>
    <property type="match status" value="1"/>
</dbReference>
<dbReference type="Pfam" id="PF04116">
    <property type="entry name" value="FA_hydroxylase"/>
    <property type="match status" value="1"/>
</dbReference>
<feature type="chain" id="PRO_0000249852" description="Methylsterol monooxygenase 1">
    <location>
        <begin position="1"/>
        <end position="296"/>
    </location>
</feature>
<feature type="transmembrane region" description="Helical" evidence="3">
    <location>
        <begin position="55"/>
        <end position="75"/>
    </location>
</feature>
<feature type="transmembrane region" description="Helical" evidence="3">
    <location>
        <begin position="100"/>
        <end position="120"/>
    </location>
</feature>
<feature type="transmembrane region" description="Helical" evidence="3">
    <location>
        <begin position="199"/>
        <end position="219"/>
    </location>
</feature>
<feature type="domain" description="Fatty acid hydroxylase" evidence="3">
    <location>
        <begin position="145"/>
        <end position="274"/>
    </location>
</feature>
<feature type="short sequence motif" description="Histidine box-1" evidence="1">
    <location>
        <begin position="157"/>
        <end position="161"/>
    </location>
</feature>
<feature type="short sequence motif" description="Histidine box-2" evidence="1">
    <location>
        <begin position="170"/>
        <end position="174"/>
    </location>
</feature>
<feature type="short sequence motif" description="Histidine box-3" evidence="1">
    <location>
        <begin position="249"/>
        <end position="255"/>
    </location>
</feature>
<gene>
    <name type="primary">MSMO1</name>
    <name type="synonym">SC4MOL</name>
    <name type="ORF">RCJMB04_5j19</name>
</gene>
<evidence type="ECO:0000250" key="1"/>
<evidence type="ECO:0000250" key="2">
    <source>
        <dbReference type="UniProtKB" id="P53045"/>
    </source>
</evidence>
<evidence type="ECO:0000255" key="3"/>
<evidence type="ECO:0000305" key="4"/>
<keyword id="KW-0256">Endoplasmic reticulum</keyword>
<keyword id="KW-0408">Iron</keyword>
<keyword id="KW-0444">Lipid biosynthesis</keyword>
<keyword id="KW-0443">Lipid metabolism</keyword>
<keyword id="KW-0472">Membrane</keyword>
<keyword id="KW-0520">NAD</keyword>
<keyword id="KW-0560">Oxidoreductase</keyword>
<keyword id="KW-1185">Reference proteome</keyword>
<keyword id="KW-0752">Steroid biosynthesis</keyword>
<keyword id="KW-0753">Steroid metabolism</keyword>
<keyword id="KW-0756">Sterol biosynthesis</keyword>
<keyword id="KW-1207">Sterol metabolism</keyword>
<keyword id="KW-0812">Transmembrane</keyword>
<keyword id="KW-1133">Transmembrane helix</keyword>
<organism>
    <name type="scientific">Gallus gallus</name>
    <name type="common">Chicken</name>
    <dbReference type="NCBI Taxonomy" id="9031"/>
    <lineage>
        <taxon>Eukaryota</taxon>
        <taxon>Metazoa</taxon>
        <taxon>Chordata</taxon>
        <taxon>Craniata</taxon>
        <taxon>Vertebrata</taxon>
        <taxon>Euteleostomi</taxon>
        <taxon>Archelosauria</taxon>
        <taxon>Archosauria</taxon>
        <taxon>Dinosauria</taxon>
        <taxon>Saurischia</taxon>
        <taxon>Theropoda</taxon>
        <taxon>Coelurosauria</taxon>
        <taxon>Aves</taxon>
        <taxon>Neognathae</taxon>
        <taxon>Galloanserae</taxon>
        <taxon>Galliformes</taxon>
        <taxon>Phasianidae</taxon>
        <taxon>Phasianinae</taxon>
        <taxon>Gallus</taxon>
    </lineage>
</organism>
<proteinExistence type="evidence at transcript level"/>
<sequence>MAVNDSVNILNSAYLAVEYIDSFLPDNPLQQPFKNAWNYMLDNYTKFQIATWGSLLVHEASYFLLCVPGFIFQFIPYMQKYKIQPDKPETWEKQWKCFKTLIFNHFFIQLPLICGTYYFTEYFNIPYEWEEMPRWYVLLAQCFGCAVIEDAWHYFLHRLLHHKRIYKYIHKVHHEFVSPFGMQAEYAHPLETLILGAGFFIGIVVFCNHVVLLWAWVICRLMETIDVHSGYDIPLNPLHLVPFYAGARFHDFHHMNFIGNYASTFTWWDRIFGTDSQFIAYKEKEKKQQLRMKKTN</sequence>
<protein>
    <recommendedName>
        <fullName>Methylsterol monooxygenase 1</fullName>
        <ecNumber evidence="2">1.14.18.9</ecNumber>
    </recommendedName>
    <alternativeName>
        <fullName>C-4 methylsterol oxidase</fullName>
    </alternativeName>
</protein>